<name>RLMKL_MANSM</name>
<dbReference type="EC" id="2.1.1.173" evidence="1"/>
<dbReference type="EC" id="2.1.1.264" evidence="1"/>
<dbReference type="EMBL" id="AE016827">
    <property type="protein sequence ID" value="AAU37354.1"/>
    <property type="molecule type" value="Genomic_DNA"/>
</dbReference>
<dbReference type="RefSeq" id="WP_011199926.1">
    <property type="nucleotide sequence ID" value="NC_006300.1"/>
</dbReference>
<dbReference type="SMR" id="Q65UK6"/>
<dbReference type="STRING" id="221988.MS0747"/>
<dbReference type="KEGG" id="msu:MS0747"/>
<dbReference type="eggNOG" id="COG0116">
    <property type="taxonomic scope" value="Bacteria"/>
</dbReference>
<dbReference type="eggNOG" id="COG1092">
    <property type="taxonomic scope" value="Bacteria"/>
</dbReference>
<dbReference type="HOGENOM" id="CLU_014042_2_0_6"/>
<dbReference type="OrthoDB" id="9809404at2"/>
<dbReference type="Proteomes" id="UP000000607">
    <property type="component" value="Chromosome"/>
</dbReference>
<dbReference type="GO" id="GO:0005737">
    <property type="term" value="C:cytoplasm"/>
    <property type="evidence" value="ECO:0007669"/>
    <property type="project" value="UniProtKB-SubCell"/>
</dbReference>
<dbReference type="GO" id="GO:0052915">
    <property type="term" value="F:23S rRNA (guanine(2445)-N(2))-methyltransferase activity"/>
    <property type="evidence" value="ECO:0007669"/>
    <property type="project" value="UniProtKB-UniRule"/>
</dbReference>
<dbReference type="GO" id="GO:0003723">
    <property type="term" value="F:RNA binding"/>
    <property type="evidence" value="ECO:0007669"/>
    <property type="project" value="UniProtKB-KW"/>
</dbReference>
<dbReference type="GO" id="GO:0070043">
    <property type="term" value="F:rRNA (guanine-N7-)-methyltransferase activity"/>
    <property type="evidence" value="ECO:0007669"/>
    <property type="project" value="UniProtKB-UniRule"/>
</dbReference>
<dbReference type="CDD" id="cd02440">
    <property type="entry name" value="AdoMet_MTases"/>
    <property type="match status" value="2"/>
</dbReference>
<dbReference type="CDD" id="cd11715">
    <property type="entry name" value="THUMP_AdoMetMT"/>
    <property type="match status" value="1"/>
</dbReference>
<dbReference type="FunFam" id="3.30.750.80:FF:000001">
    <property type="entry name" value="Ribosomal RNA large subunit methyltransferase K/L"/>
    <property type="match status" value="1"/>
</dbReference>
<dbReference type="FunFam" id="3.40.50.150:FF:000039">
    <property type="entry name" value="Ribosomal RNA large subunit methyltransferase K/L"/>
    <property type="match status" value="1"/>
</dbReference>
<dbReference type="Gene3D" id="3.30.2130.30">
    <property type="match status" value="1"/>
</dbReference>
<dbReference type="Gene3D" id="3.30.750.80">
    <property type="entry name" value="RNA methyltransferase domain (HRMD) like"/>
    <property type="match status" value="1"/>
</dbReference>
<dbReference type="Gene3D" id="3.40.50.150">
    <property type="entry name" value="Vaccinia Virus protein VP39"/>
    <property type="match status" value="2"/>
</dbReference>
<dbReference type="HAMAP" id="MF_01858">
    <property type="entry name" value="23SrRNA_methyltr_KL"/>
    <property type="match status" value="1"/>
</dbReference>
<dbReference type="InterPro" id="IPR017244">
    <property type="entry name" value="23SrRNA_methyltr_KL"/>
</dbReference>
<dbReference type="InterPro" id="IPR002052">
    <property type="entry name" value="DNA_methylase_N6_adenine_CS"/>
</dbReference>
<dbReference type="InterPro" id="IPR000241">
    <property type="entry name" value="RlmKL-like_Mtase"/>
</dbReference>
<dbReference type="InterPro" id="IPR053943">
    <property type="entry name" value="RlmKL-like_Mtase_CS"/>
</dbReference>
<dbReference type="InterPro" id="IPR054170">
    <property type="entry name" value="RlmL_1st"/>
</dbReference>
<dbReference type="InterPro" id="IPR019614">
    <property type="entry name" value="SAM-dep_methyl-trfase"/>
</dbReference>
<dbReference type="InterPro" id="IPR029063">
    <property type="entry name" value="SAM-dependent_MTases_sf"/>
</dbReference>
<dbReference type="InterPro" id="IPR004114">
    <property type="entry name" value="THUMP_dom"/>
</dbReference>
<dbReference type="NCBIfam" id="NF008748">
    <property type="entry name" value="PRK11783.1"/>
    <property type="match status" value="1"/>
</dbReference>
<dbReference type="PANTHER" id="PTHR47313">
    <property type="entry name" value="RIBOSOMAL RNA LARGE SUBUNIT METHYLTRANSFERASE K/L"/>
    <property type="match status" value="1"/>
</dbReference>
<dbReference type="PANTHER" id="PTHR47313:SF1">
    <property type="entry name" value="RIBOSOMAL RNA LARGE SUBUNIT METHYLTRANSFERASE K_L"/>
    <property type="match status" value="1"/>
</dbReference>
<dbReference type="Pfam" id="PF10672">
    <property type="entry name" value="Methyltrans_SAM"/>
    <property type="match status" value="1"/>
</dbReference>
<dbReference type="Pfam" id="PF22020">
    <property type="entry name" value="RlmL_1st"/>
    <property type="match status" value="1"/>
</dbReference>
<dbReference type="Pfam" id="PF02926">
    <property type="entry name" value="THUMP"/>
    <property type="match status" value="1"/>
</dbReference>
<dbReference type="Pfam" id="PF01170">
    <property type="entry name" value="UPF0020"/>
    <property type="match status" value="1"/>
</dbReference>
<dbReference type="PIRSF" id="PIRSF037618">
    <property type="entry name" value="RNA_Mtase_bacteria_prd"/>
    <property type="match status" value="1"/>
</dbReference>
<dbReference type="SMART" id="SM00981">
    <property type="entry name" value="THUMP"/>
    <property type="match status" value="1"/>
</dbReference>
<dbReference type="SUPFAM" id="SSF53335">
    <property type="entry name" value="S-adenosyl-L-methionine-dependent methyltransferases"/>
    <property type="match status" value="2"/>
</dbReference>
<dbReference type="PROSITE" id="PS51165">
    <property type="entry name" value="THUMP"/>
    <property type="match status" value="1"/>
</dbReference>
<dbReference type="PROSITE" id="PS01261">
    <property type="entry name" value="UPF0020"/>
    <property type="match status" value="1"/>
</dbReference>
<proteinExistence type="inferred from homology"/>
<reference key="1">
    <citation type="journal article" date="2004" name="Nat. Biotechnol.">
        <title>The genome sequence of the capnophilic rumen bacterium Mannheimia succiniciproducens.</title>
        <authorList>
            <person name="Hong S.H."/>
            <person name="Kim J.S."/>
            <person name="Lee S.Y."/>
            <person name="In Y.H."/>
            <person name="Choi S.S."/>
            <person name="Rih J.-K."/>
            <person name="Kim C.H."/>
            <person name="Jeong H."/>
            <person name="Hur C.G."/>
            <person name="Kim J.J."/>
        </authorList>
    </citation>
    <scope>NUCLEOTIDE SEQUENCE [LARGE SCALE GENOMIC DNA]</scope>
    <source>
        <strain>KCTC 0769BP / MBEL55E</strain>
    </source>
</reference>
<protein>
    <recommendedName>
        <fullName evidence="1">Ribosomal RNA large subunit methyltransferase K/L</fullName>
    </recommendedName>
    <domain>
        <recommendedName>
            <fullName evidence="1">23S rRNA m2G2445 methyltransferase</fullName>
            <ecNumber evidence="1">2.1.1.173</ecNumber>
        </recommendedName>
        <alternativeName>
            <fullName evidence="1">rRNA (guanine-N(2)-)-methyltransferase RlmL</fullName>
        </alternativeName>
    </domain>
    <domain>
        <recommendedName>
            <fullName evidence="1">23S rRNA m7G2069 methyltransferase</fullName>
            <ecNumber evidence="1">2.1.1.264</ecNumber>
        </recommendedName>
        <alternativeName>
            <fullName evidence="1">rRNA (guanine-N(7)-)-methyltransferase RlmK</fullName>
        </alternativeName>
    </domain>
</protein>
<comment type="function">
    <text evidence="1">Specifically methylates the guanine in position 2445 (m2G2445) and the guanine in position 2069 (m7G2069) of 23S rRNA.</text>
</comment>
<comment type="catalytic activity">
    <reaction evidence="1">
        <text>guanosine(2445) in 23S rRNA + S-adenosyl-L-methionine = N(2)-methylguanosine(2445) in 23S rRNA + S-adenosyl-L-homocysteine + H(+)</text>
        <dbReference type="Rhea" id="RHEA:42740"/>
        <dbReference type="Rhea" id="RHEA-COMP:10215"/>
        <dbReference type="Rhea" id="RHEA-COMP:10216"/>
        <dbReference type="ChEBI" id="CHEBI:15378"/>
        <dbReference type="ChEBI" id="CHEBI:57856"/>
        <dbReference type="ChEBI" id="CHEBI:59789"/>
        <dbReference type="ChEBI" id="CHEBI:74269"/>
        <dbReference type="ChEBI" id="CHEBI:74481"/>
        <dbReference type="EC" id="2.1.1.173"/>
    </reaction>
</comment>
<comment type="catalytic activity">
    <reaction evidence="1">
        <text>guanosine(2069) in 23S rRNA + S-adenosyl-L-methionine = N(2)-methylguanosine(2069) in 23S rRNA + S-adenosyl-L-homocysteine + H(+)</text>
        <dbReference type="Rhea" id="RHEA:43772"/>
        <dbReference type="Rhea" id="RHEA-COMP:10688"/>
        <dbReference type="Rhea" id="RHEA-COMP:10689"/>
        <dbReference type="ChEBI" id="CHEBI:15378"/>
        <dbReference type="ChEBI" id="CHEBI:57856"/>
        <dbReference type="ChEBI" id="CHEBI:59789"/>
        <dbReference type="ChEBI" id="CHEBI:74269"/>
        <dbReference type="ChEBI" id="CHEBI:74481"/>
        <dbReference type="EC" id="2.1.1.264"/>
    </reaction>
</comment>
<comment type="subcellular location">
    <subcellularLocation>
        <location evidence="1">Cytoplasm</location>
    </subcellularLocation>
</comment>
<comment type="similarity">
    <text evidence="1">Belongs to the methyltransferase superfamily. RlmKL family.</text>
</comment>
<accession>Q65UK6</accession>
<evidence type="ECO:0000255" key="1">
    <source>
        <dbReference type="HAMAP-Rule" id="MF_01858"/>
    </source>
</evidence>
<keyword id="KW-0963">Cytoplasm</keyword>
<keyword id="KW-0489">Methyltransferase</keyword>
<keyword id="KW-0694">RNA-binding</keyword>
<keyword id="KW-0698">rRNA processing</keyword>
<keyword id="KW-0949">S-adenosyl-L-methionine</keyword>
<keyword id="KW-0808">Transferase</keyword>
<feature type="chain" id="PRO_0000366774" description="Ribosomal RNA large subunit methyltransferase K/L">
    <location>
        <begin position="1"/>
        <end position="715"/>
    </location>
</feature>
<feature type="domain" description="THUMP" evidence="1">
    <location>
        <begin position="43"/>
        <end position="154"/>
    </location>
</feature>
<organism>
    <name type="scientific">Mannheimia succiniciproducens (strain KCTC 0769BP / MBEL55E)</name>
    <dbReference type="NCBI Taxonomy" id="221988"/>
    <lineage>
        <taxon>Bacteria</taxon>
        <taxon>Pseudomonadati</taxon>
        <taxon>Pseudomonadota</taxon>
        <taxon>Gammaproteobacteria</taxon>
        <taxon>Pasteurellales</taxon>
        <taxon>Pasteurellaceae</taxon>
        <taxon>Basfia</taxon>
    </lineage>
</organism>
<sequence length="715" mass="81275">MKELFATTARGFEELLKLELSSLGATECQVAQGGVHFMADDETQYRALLWSRLSSRILLPIVKTKIYSDLDLYSAVVRQNWLAYFDERVRFLVDFNGTNREIRHTQFGAMRVKDGIVDYFERNGKARPNVDKDYPDIRIHAYLNRDDLVLSLDLSGEALHLRGYREDSGAAPLRETLAAAIVLRSGWKQGTPLVDPMCGSGTLLIEAAQMEAKIAPQLHRMHWGFDFWRGHNQAAWEKVKREAVAMAEAEFNKNPNPHFYGFDLDHRVLQKAQRNAQNAGVAHLIKWKQGDVAALKNPTPEDKGTVICNPPYGERLGTTPALIALYSVFGQRLKEQFPGWNASIFSSEQGLLDCLRMRSHRQFKAKNGPLDCIQKNYQISDRTLSPENKSAVENAGEFKPNANVATDFANRLQKNIKKIEKWAKQEGIEAYRLYDADLPDYNLAVDHYGDHIVVQEYAAPKNIDENKARQRLLDAVTATLAVTGVETNKLILKVRQKQKGANQYEKLANKGEYFYVNEYGAKLWVNLTDYLDTGLFLDHRLTRRMVGQMAKGKDFLNLFAYTGSATVHAALGGAKSTTTVDMSNTYLNWAEQNLILNEADGKQHKLIQADCLQWLANCAQQFDLIFVDPPTFSNSKRMEDSWDVQRDHIKLMGNLKRILRPNGTIVFSNNKRGFKMDFEGLTRLGLKAEEISAKTLPLDFERNKQIHNCWIVEFV</sequence>
<gene>
    <name evidence="1" type="primary">rlmL</name>
    <name type="ordered locus">MS0747</name>
</gene>